<proteinExistence type="evidence at protein level"/>
<organism>
    <name type="scientific">Danio rerio</name>
    <name type="common">Zebrafish</name>
    <name type="synonym">Brachydanio rerio</name>
    <dbReference type="NCBI Taxonomy" id="7955"/>
    <lineage>
        <taxon>Eukaryota</taxon>
        <taxon>Metazoa</taxon>
        <taxon>Chordata</taxon>
        <taxon>Craniata</taxon>
        <taxon>Vertebrata</taxon>
        <taxon>Euteleostomi</taxon>
        <taxon>Actinopterygii</taxon>
        <taxon>Neopterygii</taxon>
        <taxon>Teleostei</taxon>
        <taxon>Ostariophysi</taxon>
        <taxon>Cypriniformes</taxon>
        <taxon>Danionidae</taxon>
        <taxon>Danioninae</taxon>
        <taxon>Danio</taxon>
    </lineage>
</organism>
<accession>F1QLR3</accession>
<accession>A0A8M1P7M4</accession>
<accession>A0A8M1PJ50</accession>
<gene>
    <name evidence="8 10" type="primary">fxr1</name>
</gene>
<protein>
    <recommendedName>
        <fullName evidence="9">RNA-binding protein FXR1</fullName>
    </recommendedName>
    <alternativeName>
        <fullName evidence="9">FMR1 autosomal homolog 1</fullName>
    </alternativeName>
</protein>
<feature type="chain" id="PRO_0000457812" description="RNA-binding protein FXR1">
    <location>
        <begin position="1"/>
        <end position="622"/>
    </location>
</feature>
<feature type="domain" description="Agenet-like 1" evidence="4">
    <location>
        <begin position="4"/>
        <end position="50"/>
    </location>
</feature>
<feature type="domain" description="Agenet-like 2" evidence="4">
    <location>
        <begin position="63"/>
        <end position="115"/>
    </location>
</feature>
<feature type="domain" description="KH 1" evidence="3">
    <location>
        <begin position="218"/>
        <end position="279"/>
    </location>
</feature>
<feature type="domain" description="KH 2" evidence="3">
    <location>
        <begin position="281"/>
        <end position="351"/>
    </location>
</feature>
<feature type="region of interest" description="CC1 domain" evidence="1">
    <location>
        <begin position="201"/>
        <end position="208"/>
    </location>
</feature>
<feature type="region of interest" description="CC2 domain" evidence="1">
    <location>
        <begin position="353"/>
        <end position="379"/>
    </location>
</feature>
<feature type="region of interest" description="Disordered" evidence="5">
    <location>
        <begin position="382"/>
        <end position="622"/>
    </location>
</feature>
<feature type="compositionally biased region" description="Polar residues" evidence="5">
    <location>
        <begin position="400"/>
        <end position="409"/>
    </location>
</feature>
<feature type="compositionally biased region" description="Basic residues" evidence="5">
    <location>
        <begin position="410"/>
        <end position="420"/>
    </location>
</feature>
<feature type="compositionally biased region" description="Polar residues" evidence="5">
    <location>
        <begin position="425"/>
        <end position="437"/>
    </location>
</feature>
<feature type="compositionally biased region" description="Basic and acidic residues" evidence="5">
    <location>
        <begin position="455"/>
        <end position="468"/>
    </location>
</feature>
<feature type="compositionally biased region" description="Basic residues" evidence="5">
    <location>
        <begin position="469"/>
        <end position="479"/>
    </location>
</feature>
<feature type="compositionally biased region" description="Acidic residues" evidence="5">
    <location>
        <begin position="505"/>
        <end position="515"/>
    </location>
</feature>
<feature type="compositionally biased region" description="Polar residues" evidence="5">
    <location>
        <begin position="545"/>
        <end position="555"/>
    </location>
</feature>
<feature type="compositionally biased region" description="Basic and acidic residues" evidence="5">
    <location>
        <begin position="574"/>
        <end position="596"/>
    </location>
</feature>
<feature type="modified residue" description="Phosphoserine; by PAK1" evidence="7">
    <location>
        <position position="447"/>
    </location>
</feature>
<feature type="splice variant" id="VSP_061843" description="In isoform 2 and isoform 3.">
    <original>R</original>
    <variation>RGS</variation>
    <location>
        <position position="481"/>
    </location>
</feature>
<feature type="splice variant" id="VSP_061844" description="In isoform 2.">
    <original>L</original>
    <variation>LDEAEAKSQRRNRSRRRRFRPAEERQP</variation>
    <location>
        <position position="556"/>
    </location>
</feature>
<feature type="sequence conflict" description="In Ref. 2; AAH55557." evidence="9" ref="2">
    <original>F</original>
    <variation>S</variation>
    <location>
        <position position="68"/>
    </location>
</feature>
<feature type="sequence conflict" description="In Ref. 3; AAD53274." evidence="9" ref="3">
    <original>AV</original>
    <variation>TL</variation>
    <location>
        <begin position="271"/>
        <end position="272"/>
    </location>
</feature>
<feature type="sequence conflict" description="In Ref. 3; AAD53274." evidence="9" ref="3">
    <original>N</original>
    <variation>S</variation>
    <location>
        <position position="300"/>
    </location>
</feature>
<feature type="sequence conflict" description="In Ref. 2; AAH68402/AAH55557 and 3; AAD53274." evidence="9" ref="2 3">
    <original>L</original>
    <variation>M</variation>
    <location>
        <position position="471"/>
    </location>
</feature>
<feature type="sequence conflict" description="In Ref. 2; AAH68402." evidence="9" ref="2">
    <original>R</original>
    <variation>P</variation>
    <location sequence="F1QLR3-2">
        <position position="577"/>
    </location>
</feature>
<comment type="function">
    <text evidence="1 2 6 7">mRNA-binding protein that acts as a regulator of mRNAs translation and/or stability, and which is required for various processes, such as heart and muscle development (PubMed:19648401, PubMed:20417602). Specifically binds to AU-rich elements (AREs) in the 3'-UTR of target mRNAs (By similarity). Promotes formation of some phase-separated membraneless compartment by undergoing liquid-liquid phase separation upon binding to AREs-containing mRNAs: mRNAs storage into membraneless compartments regulates their translation and/or stability (By similarity). Forms a cytoplasmic messenger ribonucleoprotein (mRNP) network by packaging long mRNAs, serving as a scaffold that recruits proteins and signaling molecules (By similarity).</text>
</comment>
<comment type="subcellular location">
    <subcellularLocation>
        <location evidence="2">Cytoplasm</location>
        <location evidence="2">Cytoplasmic ribonucleoprotein granule</location>
    </subcellularLocation>
    <subcellularLocation>
        <location evidence="2">Cytoplasm</location>
    </subcellularLocation>
    <text evidence="2">Specifically localizes to cytoplasmic ribonucleoprotein membraneless compartments.</text>
</comment>
<comment type="alternative products">
    <event type="alternative splicing"/>
    <isoform>
        <id>F1QLR3-1</id>
        <name>1</name>
        <sequence type="displayed"/>
    </isoform>
    <isoform>
        <id>F1QLR3-2</id>
        <name>2</name>
        <sequence type="described" ref="VSP_061843 VSP_061844"/>
    </isoform>
    <isoform>
        <id>F1QLR3-3</id>
        <name>3</name>
        <sequence type="described" ref="VSP_061843"/>
    </isoform>
</comment>
<comment type="domain">
    <text evidence="2">Disordered region at the C-terminus undergoes liquid-liquid phase separation (LLPS) for the formation of a membraneless compartment that stores mRNAs.</text>
</comment>
<comment type="domain">
    <text evidence="1">CC1 and CC2 domains are required for homodimerization and FXR1-network nucleation. CC domains also mediate interaction with other proteins containing similar CC domains.</text>
</comment>
<comment type="PTM">
    <text evidence="7">Phosphorylation at Ser-447 by PAK1 promotes its activity.</text>
</comment>
<comment type="disruption phenotype">
    <text evidence="6">Morpholino knockdown of the protein causes abnormalities of striated muscle development and abnormal development of the heart, including failure of looping and snapping of the atrium from its venous pole.</text>
</comment>
<comment type="similarity">
    <text evidence="9">Belongs to the FMR1 family.</text>
</comment>
<name>FXR1_DANRE</name>
<dbReference type="EMBL" id="CU468728">
    <property type="status" value="NOT_ANNOTATED_CDS"/>
    <property type="molecule type" value="Genomic_DNA"/>
</dbReference>
<dbReference type="EMBL" id="BC055557">
    <property type="protein sequence ID" value="AAH55557.1"/>
    <property type="molecule type" value="mRNA"/>
</dbReference>
<dbReference type="EMBL" id="BC068402">
    <property type="protein sequence ID" value="AAH68402.1"/>
    <property type="molecule type" value="mRNA"/>
</dbReference>
<dbReference type="EMBL" id="AF169146">
    <property type="protein sequence ID" value="AAD53274.1"/>
    <property type="molecule type" value="mRNA"/>
</dbReference>
<dbReference type="RefSeq" id="NP_958458.2">
    <molecule id="F1QLR3-1"/>
    <property type="nucleotide sequence ID" value="NM_201301.2"/>
</dbReference>
<dbReference type="SMR" id="F1QLR3"/>
<dbReference type="FunCoup" id="F1QLR3">
    <property type="interactions" value="1760"/>
</dbReference>
<dbReference type="iPTMnet" id="F1QLR3"/>
<dbReference type="Ensembl" id="ENSDART00000104478">
    <molecule id="F1QLR3-1"/>
    <property type="protein sequence ID" value="ENSDARP00000095251"/>
    <property type="gene ID" value="ENSDARG00000022968"/>
</dbReference>
<dbReference type="GeneID" id="327220"/>
<dbReference type="KEGG" id="dre:327220"/>
<dbReference type="AGR" id="ZFIN:ZDB-GENE-030131-5431"/>
<dbReference type="CTD" id="8087"/>
<dbReference type="ZFIN" id="ZDB-GENE-030131-5431">
    <property type="gene designation" value="fxr1"/>
</dbReference>
<dbReference type="HOGENOM" id="CLU_020699_3_0_1"/>
<dbReference type="InParanoid" id="F1QLR3"/>
<dbReference type="OrthoDB" id="424249at2759"/>
<dbReference type="TreeFam" id="TF105427"/>
<dbReference type="PRO" id="PR:F1QLR3"/>
<dbReference type="Proteomes" id="UP000000437">
    <property type="component" value="Chromosome 22"/>
</dbReference>
<dbReference type="Bgee" id="ENSDARG00000022968">
    <property type="expression patterns" value="Expressed in muscle tissue and 31 other cell types or tissues"/>
</dbReference>
<dbReference type="ExpressionAtlas" id="F1QLR3">
    <property type="expression patterns" value="baseline"/>
</dbReference>
<dbReference type="GO" id="GO:0010494">
    <property type="term" value="C:cytoplasmic stress granule"/>
    <property type="evidence" value="ECO:0000318"/>
    <property type="project" value="GO_Central"/>
</dbReference>
<dbReference type="GO" id="GO:0043232">
    <property type="term" value="C:intracellular membraneless organelle"/>
    <property type="evidence" value="ECO:0000250"/>
    <property type="project" value="UniProtKB"/>
</dbReference>
<dbReference type="GO" id="GO:0043005">
    <property type="term" value="C:neuron projection"/>
    <property type="evidence" value="ECO:0000318"/>
    <property type="project" value="GO_Central"/>
</dbReference>
<dbReference type="GO" id="GO:0005634">
    <property type="term" value="C:nucleus"/>
    <property type="evidence" value="ECO:0000318"/>
    <property type="project" value="GO_Central"/>
</dbReference>
<dbReference type="GO" id="GO:0098793">
    <property type="term" value="C:presynapse"/>
    <property type="evidence" value="ECO:0007669"/>
    <property type="project" value="GOC"/>
</dbReference>
<dbReference type="GO" id="GO:0140693">
    <property type="term" value="F:molecular condensate scaffold activity"/>
    <property type="evidence" value="ECO:0000250"/>
    <property type="project" value="UniProtKB"/>
</dbReference>
<dbReference type="GO" id="GO:0035925">
    <property type="term" value="F:mRNA 3'-UTR AU-rich region binding"/>
    <property type="evidence" value="ECO:0000250"/>
    <property type="project" value="UniProtKB"/>
</dbReference>
<dbReference type="GO" id="GO:0003730">
    <property type="term" value="F:mRNA 3'-UTR binding"/>
    <property type="evidence" value="ECO:0000318"/>
    <property type="project" value="GO_Central"/>
</dbReference>
<dbReference type="GO" id="GO:0003729">
    <property type="term" value="F:mRNA binding"/>
    <property type="evidence" value="ECO:0000250"/>
    <property type="project" value="UniProtKB"/>
</dbReference>
<dbReference type="GO" id="GO:0045182">
    <property type="term" value="F:translation regulator activity"/>
    <property type="evidence" value="ECO:0000318"/>
    <property type="project" value="GO_Central"/>
</dbReference>
<dbReference type="GO" id="GO:0048513">
    <property type="term" value="P:animal organ development"/>
    <property type="evidence" value="ECO:0000318"/>
    <property type="project" value="GO_Central"/>
</dbReference>
<dbReference type="GO" id="GO:0021542">
    <property type="term" value="P:dentate gyrus development"/>
    <property type="evidence" value="ECO:0000250"/>
    <property type="project" value="UniProtKB"/>
</dbReference>
<dbReference type="GO" id="GO:0007507">
    <property type="term" value="P:heart development"/>
    <property type="evidence" value="ECO:0000315"/>
    <property type="project" value="ZFIN"/>
</dbReference>
<dbReference type="GO" id="GO:0140694">
    <property type="term" value="P:membraneless organelle assembly"/>
    <property type="evidence" value="ECO:0000250"/>
    <property type="project" value="UniProtKB"/>
</dbReference>
<dbReference type="GO" id="GO:0061157">
    <property type="term" value="P:mRNA destabilization"/>
    <property type="evidence" value="ECO:0000250"/>
    <property type="project" value="UniProtKB"/>
</dbReference>
<dbReference type="GO" id="GO:0051028">
    <property type="term" value="P:mRNA transport"/>
    <property type="evidence" value="ECO:0000318"/>
    <property type="project" value="GO_Central"/>
</dbReference>
<dbReference type="GO" id="GO:0055001">
    <property type="term" value="P:muscle cell development"/>
    <property type="evidence" value="ECO:0000315"/>
    <property type="project" value="ZFIN"/>
</dbReference>
<dbReference type="GO" id="GO:0050728">
    <property type="term" value="P:negative regulation of inflammatory response"/>
    <property type="evidence" value="ECO:0000250"/>
    <property type="project" value="UniProtKB"/>
</dbReference>
<dbReference type="GO" id="GO:1900272">
    <property type="term" value="P:negative regulation of long-term synaptic potentiation"/>
    <property type="evidence" value="ECO:0000250"/>
    <property type="project" value="UniProtKB"/>
</dbReference>
<dbReference type="GO" id="GO:0017148">
    <property type="term" value="P:negative regulation of translation"/>
    <property type="evidence" value="ECO:0000250"/>
    <property type="project" value="UniProtKB"/>
</dbReference>
<dbReference type="GO" id="GO:0032720">
    <property type="term" value="P:negative regulation of tumor necrosis factor production"/>
    <property type="evidence" value="ECO:0000250"/>
    <property type="project" value="UniProtKB"/>
</dbReference>
<dbReference type="GO" id="GO:0048170">
    <property type="term" value="P:positive regulation of long-term neuronal synaptic plasticity"/>
    <property type="evidence" value="ECO:0000318"/>
    <property type="project" value="GO_Central"/>
</dbReference>
<dbReference type="GO" id="GO:0045727">
    <property type="term" value="P:positive regulation of translation"/>
    <property type="evidence" value="ECO:0000250"/>
    <property type="project" value="UniProtKB"/>
</dbReference>
<dbReference type="GO" id="GO:0010608">
    <property type="term" value="P:post-transcriptional regulation of gene expression"/>
    <property type="evidence" value="ECO:0000250"/>
    <property type="project" value="UniProtKB"/>
</dbReference>
<dbReference type="GO" id="GO:0043488">
    <property type="term" value="P:regulation of mRNA stability"/>
    <property type="evidence" value="ECO:0000318"/>
    <property type="project" value="GO_Central"/>
</dbReference>
<dbReference type="GO" id="GO:0050767">
    <property type="term" value="P:regulation of neurogenesis"/>
    <property type="evidence" value="ECO:0000250"/>
    <property type="project" value="UniProtKB"/>
</dbReference>
<dbReference type="GO" id="GO:0051966">
    <property type="term" value="P:regulation of synaptic transmission, glutamatergic"/>
    <property type="evidence" value="ECO:0000250"/>
    <property type="project" value="UniProtKB"/>
</dbReference>
<dbReference type="GO" id="GO:0099577">
    <property type="term" value="P:regulation of translation at presynapse, modulating synaptic transmission"/>
    <property type="evidence" value="ECO:0000318"/>
    <property type="project" value="GO_Central"/>
</dbReference>
<dbReference type="GO" id="GO:0007519">
    <property type="term" value="P:skeletal muscle tissue development"/>
    <property type="evidence" value="ECO:0000315"/>
    <property type="project" value="ZFIN"/>
</dbReference>
<dbReference type="GO" id="GO:0001756">
    <property type="term" value="P:somitogenesis"/>
    <property type="evidence" value="ECO:0000315"/>
    <property type="project" value="ZFIN"/>
</dbReference>
<dbReference type="GO" id="GO:0007286">
    <property type="term" value="P:spermatid development"/>
    <property type="evidence" value="ECO:0000250"/>
    <property type="project" value="UniProtKB"/>
</dbReference>
<dbReference type="CDD" id="cd22504">
    <property type="entry name" value="KH_I_FXR1_rpt1"/>
    <property type="match status" value="1"/>
</dbReference>
<dbReference type="CDD" id="cd22507">
    <property type="entry name" value="KH_I_FXR1_rpt2"/>
    <property type="match status" value="1"/>
</dbReference>
<dbReference type="CDD" id="cd22510">
    <property type="entry name" value="KH_I_FXR1_rpt3"/>
    <property type="match status" value="1"/>
</dbReference>
<dbReference type="CDD" id="cd20472">
    <property type="entry name" value="Tudor_Agenet_FXR1_rpt1"/>
    <property type="match status" value="1"/>
</dbReference>
<dbReference type="CDD" id="cd20475">
    <property type="entry name" value="Tudor_Agenet_FXR1_rpt2"/>
    <property type="match status" value="1"/>
</dbReference>
<dbReference type="FunFam" id="2.30.30.140:FF:000001">
    <property type="entry name" value="Fragile X mental retardation 1, isoform CRA_e"/>
    <property type="match status" value="1"/>
</dbReference>
<dbReference type="FunFam" id="2.30.30.140:FF:000002">
    <property type="entry name" value="Fragile X mental retardation 1, isoform CRA_e"/>
    <property type="match status" value="1"/>
</dbReference>
<dbReference type="FunFam" id="3.30.1370.10:FF:000004">
    <property type="entry name" value="Fragile X mental retardation 1, isoform CRA_e"/>
    <property type="match status" value="1"/>
</dbReference>
<dbReference type="FunFam" id="3.30.1370.10:FF:000017">
    <property type="entry name" value="Fragile X mental retardation syndrome-related protein 1"/>
    <property type="match status" value="1"/>
</dbReference>
<dbReference type="Gene3D" id="2.30.30.140">
    <property type="match status" value="2"/>
</dbReference>
<dbReference type="Gene3D" id="3.30.1370.10">
    <property type="entry name" value="K Homology domain, type 1"/>
    <property type="match status" value="2"/>
</dbReference>
<dbReference type="InterPro" id="IPR008395">
    <property type="entry name" value="Agenet-like_dom"/>
</dbReference>
<dbReference type="InterPro" id="IPR040148">
    <property type="entry name" value="FMR1"/>
</dbReference>
<dbReference type="InterPro" id="IPR022034">
    <property type="entry name" value="FMR1-like_C_core"/>
</dbReference>
<dbReference type="InterPro" id="IPR040472">
    <property type="entry name" value="FMRP_KH0"/>
</dbReference>
<dbReference type="InterPro" id="IPR032172">
    <property type="entry name" value="FXR1_C1"/>
</dbReference>
<dbReference type="InterPro" id="IPR032177">
    <property type="entry name" value="FXR_C3"/>
</dbReference>
<dbReference type="InterPro" id="IPR004087">
    <property type="entry name" value="KH_dom"/>
</dbReference>
<dbReference type="InterPro" id="IPR004088">
    <property type="entry name" value="KH_dom_type_1"/>
</dbReference>
<dbReference type="InterPro" id="IPR036612">
    <property type="entry name" value="KH_dom_type_1_sf"/>
</dbReference>
<dbReference type="InterPro" id="IPR047494">
    <property type="entry name" value="KH_I_FXR1_rpt1"/>
</dbReference>
<dbReference type="InterPro" id="IPR047495">
    <property type="entry name" value="KH_I_FXR1_rpt2"/>
</dbReference>
<dbReference type="InterPro" id="IPR047496">
    <property type="entry name" value="KH_I_FXR1_rpt3"/>
</dbReference>
<dbReference type="InterPro" id="IPR047425">
    <property type="entry name" value="Tudor_Agenet_FXR1_rpt1"/>
</dbReference>
<dbReference type="InterPro" id="IPR047427">
    <property type="entry name" value="Tudor_Agenet_FXR1_rpt2"/>
</dbReference>
<dbReference type="InterPro" id="IPR041560">
    <property type="entry name" value="Tudor_FRM1"/>
</dbReference>
<dbReference type="PANTHER" id="PTHR10603">
    <property type="entry name" value="FRAGILE X MENTAL RETARDATION SYNDROME-RELATED PROTEIN"/>
    <property type="match status" value="1"/>
</dbReference>
<dbReference type="PANTHER" id="PTHR10603:SF6">
    <property type="entry name" value="RNA-BINDING PROTEIN FXR1"/>
    <property type="match status" value="1"/>
</dbReference>
<dbReference type="Pfam" id="PF05641">
    <property type="entry name" value="Agenet"/>
    <property type="match status" value="1"/>
</dbReference>
<dbReference type="Pfam" id="PF12235">
    <property type="entry name" value="FXMRP1_C_core"/>
    <property type="match status" value="1"/>
</dbReference>
<dbReference type="Pfam" id="PF16096">
    <property type="entry name" value="FXR_C1"/>
    <property type="match status" value="1"/>
</dbReference>
<dbReference type="Pfam" id="PF16097">
    <property type="entry name" value="FXR_C3"/>
    <property type="match status" value="1"/>
</dbReference>
<dbReference type="Pfam" id="PF00013">
    <property type="entry name" value="KH_1"/>
    <property type="match status" value="2"/>
</dbReference>
<dbReference type="Pfam" id="PF17904">
    <property type="entry name" value="KH_9"/>
    <property type="match status" value="1"/>
</dbReference>
<dbReference type="Pfam" id="PF18336">
    <property type="entry name" value="Tudor_FRX1"/>
    <property type="match status" value="1"/>
</dbReference>
<dbReference type="SMART" id="SM00322">
    <property type="entry name" value="KH"/>
    <property type="match status" value="2"/>
</dbReference>
<dbReference type="SUPFAM" id="SSF54791">
    <property type="entry name" value="Eukaryotic type KH-domain (KH-domain type I)"/>
    <property type="match status" value="2"/>
</dbReference>
<dbReference type="PROSITE" id="PS51641">
    <property type="entry name" value="AGENET_LIKE"/>
    <property type="match status" value="2"/>
</dbReference>
<dbReference type="PROSITE" id="PS50084">
    <property type="entry name" value="KH_TYPE_1"/>
    <property type="match status" value="2"/>
</dbReference>
<reference key="1">
    <citation type="journal article" date="2013" name="Nature">
        <title>The zebrafish reference genome sequence and its relationship to the human genome.</title>
        <authorList>
            <person name="Howe K."/>
            <person name="Clark M.D."/>
            <person name="Torroja C.F."/>
            <person name="Torrance J."/>
            <person name="Berthelot C."/>
            <person name="Muffato M."/>
            <person name="Collins J.E."/>
            <person name="Humphray S."/>
            <person name="McLaren K."/>
            <person name="Matthews L."/>
            <person name="McLaren S."/>
            <person name="Sealy I."/>
            <person name="Caccamo M."/>
            <person name="Churcher C."/>
            <person name="Scott C."/>
            <person name="Barrett J.C."/>
            <person name="Koch R."/>
            <person name="Rauch G.J."/>
            <person name="White S."/>
            <person name="Chow W."/>
            <person name="Kilian B."/>
            <person name="Quintais L.T."/>
            <person name="Guerra-Assuncao J.A."/>
            <person name="Zhou Y."/>
            <person name="Gu Y."/>
            <person name="Yen J."/>
            <person name="Vogel J.H."/>
            <person name="Eyre T."/>
            <person name="Redmond S."/>
            <person name="Banerjee R."/>
            <person name="Chi J."/>
            <person name="Fu B."/>
            <person name="Langley E."/>
            <person name="Maguire S.F."/>
            <person name="Laird G.K."/>
            <person name="Lloyd D."/>
            <person name="Kenyon E."/>
            <person name="Donaldson S."/>
            <person name="Sehra H."/>
            <person name="Almeida-King J."/>
            <person name="Loveland J."/>
            <person name="Trevanion S."/>
            <person name="Jones M."/>
            <person name="Quail M."/>
            <person name="Willey D."/>
            <person name="Hunt A."/>
            <person name="Burton J."/>
            <person name="Sims S."/>
            <person name="McLay K."/>
            <person name="Plumb B."/>
            <person name="Davis J."/>
            <person name="Clee C."/>
            <person name="Oliver K."/>
            <person name="Clark R."/>
            <person name="Riddle C."/>
            <person name="Elliot D."/>
            <person name="Threadgold G."/>
            <person name="Harden G."/>
            <person name="Ware D."/>
            <person name="Begum S."/>
            <person name="Mortimore B."/>
            <person name="Kerry G."/>
            <person name="Heath P."/>
            <person name="Phillimore B."/>
            <person name="Tracey A."/>
            <person name="Corby N."/>
            <person name="Dunn M."/>
            <person name="Johnson C."/>
            <person name="Wood J."/>
            <person name="Clark S."/>
            <person name="Pelan S."/>
            <person name="Griffiths G."/>
            <person name="Smith M."/>
            <person name="Glithero R."/>
            <person name="Howden P."/>
            <person name="Barker N."/>
            <person name="Lloyd C."/>
            <person name="Stevens C."/>
            <person name="Harley J."/>
            <person name="Holt K."/>
            <person name="Panagiotidis G."/>
            <person name="Lovell J."/>
            <person name="Beasley H."/>
            <person name="Henderson C."/>
            <person name="Gordon D."/>
            <person name="Auger K."/>
            <person name="Wright D."/>
            <person name="Collins J."/>
            <person name="Raisen C."/>
            <person name="Dyer L."/>
            <person name="Leung K."/>
            <person name="Robertson L."/>
            <person name="Ambridge K."/>
            <person name="Leongamornlert D."/>
            <person name="McGuire S."/>
            <person name="Gilderthorp R."/>
            <person name="Griffiths C."/>
            <person name="Manthravadi D."/>
            <person name="Nichol S."/>
            <person name="Barker G."/>
            <person name="Whitehead S."/>
            <person name="Kay M."/>
            <person name="Brown J."/>
            <person name="Murnane C."/>
            <person name="Gray E."/>
            <person name="Humphries M."/>
            <person name="Sycamore N."/>
            <person name="Barker D."/>
            <person name="Saunders D."/>
            <person name="Wallis J."/>
            <person name="Babbage A."/>
            <person name="Hammond S."/>
            <person name="Mashreghi-Mohammadi M."/>
            <person name="Barr L."/>
            <person name="Martin S."/>
            <person name="Wray P."/>
            <person name="Ellington A."/>
            <person name="Matthews N."/>
            <person name="Ellwood M."/>
            <person name="Woodmansey R."/>
            <person name="Clark G."/>
            <person name="Cooper J."/>
            <person name="Tromans A."/>
            <person name="Grafham D."/>
            <person name="Skuce C."/>
            <person name="Pandian R."/>
            <person name="Andrews R."/>
            <person name="Harrison E."/>
            <person name="Kimberley A."/>
            <person name="Garnett J."/>
            <person name="Fosker N."/>
            <person name="Hall R."/>
            <person name="Garner P."/>
            <person name="Kelly D."/>
            <person name="Bird C."/>
            <person name="Palmer S."/>
            <person name="Gehring I."/>
            <person name="Berger A."/>
            <person name="Dooley C.M."/>
            <person name="Ersan-Urun Z."/>
            <person name="Eser C."/>
            <person name="Geiger H."/>
            <person name="Geisler M."/>
            <person name="Karotki L."/>
            <person name="Kirn A."/>
            <person name="Konantz J."/>
            <person name="Konantz M."/>
            <person name="Oberlander M."/>
            <person name="Rudolph-Geiger S."/>
            <person name="Teucke M."/>
            <person name="Lanz C."/>
            <person name="Raddatz G."/>
            <person name="Osoegawa K."/>
            <person name="Zhu B."/>
            <person name="Rapp A."/>
            <person name="Widaa S."/>
            <person name="Langford C."/>
            <person name="Yang F."/>
            <person name="Schuster S.C."/>
            <person name="Carter N.P."/>
            <person name="Harrow J."/>
            <person name="Ning Z."/>
            <person name="Herrero J."/>
            <person name="Searle S.M."/>
            <person name="Enright A."/>
            <person name="Geisler R."/>
            <person name="Plasterk R.H."/>
            <person name="Lee C."/>
            <person name="Westerfield M."/>
            <person name="de Jong P.J."/>
            <person name="Zon L.I."/>
            <person name="Postlethwait J.H."/>
            <person name="Nusslein-Volhard C."/>
            <person name="Hubbard T.J."/>
            <person name="Roest Crollius H."/>
            <person name="Rogers J."/>
            <person name="Stemple D.L."/>
        </authorList>
    </citation>
    <scope>NUCLEOTIDE SEQUENCE [LARGE SCALE GENOMIC DNA]</scope>
    <source>
        <strain>Tuebingen</strain>
    </source>
</reference>
<reference key="2">
    <citation type="submission" date="2004-04" db="EMBL/GenBank/DDBJ databases">
        <authorList>
            <consortium name="NIH - Zebrafish Gene Collection (ZGC) project"/>
        </authorList>
    </citation>
    <scope>NUCLEOTIDE SEQUENCE [LARGE SCALE MRNA] (ISOFORM 3)</scope>
    <scope>NUCLEOTIDE SEQUENCE [LARGE SCALE MRNA] OF 5-650 (ISOFORM 2)</scope>
    <source>
        <tissue>Embryo</tissue>
    </source>
</reference>
<reference key="3">
    <citation type="submission" date="1999-07" db="EMBL/GenBank/DDBJ databases">
        <title>Three zebrafish fragile X genes.</title>
        <authorList>
            <person name="Dobkin C."/>
            <person name="Ding X.H."/>
            <person name="Currie J."/>
            <person name="Clark M."/>
            <person name="Rose A."/>
            <person name="Brown W.T."/>
        </authorList>
    </citation>
    <scope>NUCLEOTIDE SEQUENCE [MRNA] OF 2-622 (ISOFORM 3)</scope>
</reference>
<reference key="4">
    <citation type="journal article" date="2009" name="J. Exp. Biol.">
        <title>Reduction in fragile X related 1 protein causes cardiomyopathy and muscular dystrophy in zebrafish.</title>
        <authorList>
            <person name="Van't Padje S."/>
            <person name="Chaudhry B."/>
            <person name="Severijnen L.A."/>
            <person name="van der Linde H.C."/>
            <person name="Mientjes E.J."/>
            <person name="Oostra B.A."/>
            <person name="Willemsen R."/>
        </authorList>
    </citation>
    <scope>FUNCTION</scope>
    <scope>DISRUPTION PHENOTYPE</scope>
</reference>
<reference key="5">
    <citation type="journal article" date="2010" name="Mol. Cell">
        <title>A functional requirement for PAK1 binding to the KH(2) domain of the fragile X protein-related FXR1.</title>
        <authorList>
            <person name="Say E."/>
            <person name="Tay H.G."/>
            <person name="Zhao Z.S."/>
            <person name="Baskaran Y."/>
            <person name="Li R."/>
            <person name="Lim L."/>
            <person name="Manser E."/>
        </authorList>
    </citation>
    <scope>FUNCTION</scope>
    <scope>PHOSPHORYLATION AT SER-447</scope>
</reference>
<keyword id="KW-0025">Alternative splicing</keyword>
<keyword id="KW-0963">Cytoplasm</keyword>
<keyword id="KW-0517">Myogenesis</keyword>
<keyword id="KW-0597">Phosphoprotein</keyword>
<keyword id="KW-1185">Reference proteome</keyword>
<keyword id="KW-0677">Repeat</keyword>
<keyword id="KW-0694">RNA-binding</keyword>
<evidence type="ECO:0000250" key="1">
    <source>
        <dbReference type="UniProtKB" id="P51114"/>
    </source>
</evidence>
<evidence type="ECO:0000250" key="2">
    <source>
        <dbReference type="UniProtKB" id="Q61584"/>
    </source>
</evidence>
<evidence type="ECO:0000255" key="3">
    <source>
        <dbReference type="PROSITE-ProRule" id="PRU00117"/>
    </source>
</evidence>
<evidence type="ECO:0000255" key="4">
    <source>
        <dbReference type="PROSITE-ProRule" id="PRU00973"/>
    </source>
</evidence>
<evidence type="ECO:0000256" key="5">
    <source>
        <dbReference type="SAM" id="MobiDB-lite"/>
    </source>
</evidence>
<evidence type="ECO:0000269" key="6">
    <source>
    </source>
</evidence>
<evidence type="ECO:0000269" key="7">
    <source>
    </source>
</evidence>
<evidence type="ECO:0000303" key="8">
    <source>
    </source>
</evidence>
<evidence type="ECO:0000305" key="9"/>
<evidence type="ECO:0000312" key="10">
    <source>
        <dbReference type="ZFIN" id="ZDB-GENE-030131-5431"/>
    </source>
</evidence>
<sequence length="622" mass="69742">MEELTVEVRGSNGAYYKGFVRDVHDDSLSISFENNWQPERQVPFSDVRLPPSADTKKEIGEGEEVEIFSRANEQEPCGWWLAKVRMMKGDFYVIEYAACDATYNEIVTFERLRPVNRNKAVTESTFFRCSVPVPEDLRAACESEQAHKEFKKAVGAIRIVYSPEKSELVVLSLSEATVKRVSLLSDIHLRSIRTKLMLMSRNQEATKHLESTKQLASAFQEEFTVREDLMGLAIGSHGSNIQQARKVPGVTAIELEEETGTFRIYGESTEAVQKARNYLEFLEDSVQIPRNLVGKVIGKNGKVIQEIVDKSGVVRVRIEGDNDNKLPRQEGMVPFTFVGTKESISNVQVLLEYHIAYLNEVEQLRLERLQIDEQLRQIGMGFRSVPNRPADKEKGFGPDESSSGSIHTQRSYRGRGRRGPAHTSAYGTNSEHSYTSETDSERKAELSDWSLAADESERNPRPQRDSRRRDLRGRGRGSRGRGASNSISSVLKDPDGNPYSLLDNTETDQTADTDGSESQMNTSRRRRSRRRRTDEDTTVMDGMSESDNASLSENGLVTVADYISRAESQSRQTNPRDTRKSKKDMTRGDFISEHSAAESVSNGPNNADEPSESAKAVVNGVS</sequence>